<protein>
    <recommendedName>
        <fullName evidence="1">Glucose-6-phosphate isomerase</fullName>
        <shortName evidence="1">GPI</shortName>
        <ecNumber evidence="1">5.3.1.9</ecNumber>
    </recommendedName>
    <alternativeName>
        <fullName evidence="1">Phosphoglucose isomerase</fullName>
        <shortName evidence="1">PGI</shortName>
    </alternativeName>
    <alternativeName>
        <fullName evidence="1">Phosphohexose isomerase</fullName>
        <shortName evidence="1">PHI</shortName>
    </alternativeName>
</protein>
<feature type="chain" id="PRO_0000252641" description="Glucose-6-phosphate isomerase">
    <location>
        <begin position="1"/>
        <end position="522"/>
    </location>
</feature>
<feature type="active site" description="Proton donor" evidence="1">
    <location>
        <position position="351"/>
    </location>
</feature>
<feature type="active site" evidence="1">
    <location>
        <position position="382"/>
    </location>
</feature>
<feature type="active site" evidence="1">
    <location>
        <position position="491"/>
    </location>
</feature>
<keyword id="KW-0963">Cytoplasm</keyword>
<keyword id="KW-0312">Gluconeogenesis</keyword>
<keyword id="KW-0324">Glycolysis</keyword>
<keyword id="KW-0413">Isomerase</keyword>
<keyword id="KW-1185">Reference proteome</keyword>
<sequence length="522" mass="56544">MTPTRCDRTPAWGALQAAYQTQGRAFDLRRAFALDAGRFEAFSQGAPHVFADLSKNLIDAGTEQQLLELARQTGLEQHRDAMFAGEKINTTEQRAVMHWLLRTPPADPAMPAQSVHRHMAETLHEVHTTLEAMLAFAEAVRADETITDIVNIGIGGSDLGPQMAVLALDAFVLPGKRFHFVSNVDGHELAAVLRRLKPQSTLFLIASKTFTTIETMTNARSAKAWFEAQGGTDIARHFAALTTNVAAANNFGISTTFGFWDWVGGRYSVWSAIGLPLAIAIGAVGFRDFLAGAHAMDRHFATVPLAQNLPVRLGLLDVWYRNFHGFTSRSIAPYHSALKRYPAYLQQLEMESNGKRVDAHGEALPYGTAPVLWGEPGTNGQHAYFQMLHQGTDVVPVEFVAVKQAAHDLPGHHDLLLANVLAQAQALMVGQADAGGHKNFPGNRPSTFLLLDALTPASLGALIALQEHRVFVSGSVWGINSFDQWGVELGKVLAKDVAVRLSSGNVTGLDGSTAGLLARLRA</sequence>
<accession>Q21ZD5</accession>
<proteinExistence type="inferred from homology"/>
<gene>
    <name evidence="1" type="primary">pgi</name>
    <name type="ordered locus">Rfer_1127</name>
</gene>
<dbReference type="EC" id="5.3.1.9" evidence="1"/>
<dbReference type="EMBL" id="CP000267">
    <property type="protein sequence ID" value="ABD68868.1"/>
    <property type="molecule type" value="Genomic_DNA"/>
</dbReference>
<dbReference type="RefSeq" id="WP_011463437.1">
    <property type="nucleotide sequence ID" value="NC_007908.1"/>
</dbReference>
<dbReference type="SMR" id="Q21ZD5"/>
<dbReference type="STRING" id="338969.Rfer_1127"/>
<dbReference type="KEGG" id="rfr:Rfer_1127"/>
<dbReference type="eggNOG" id="COG0166">
    <property type="taxonomic scope" value="Bacteria"/>
</dbReference>
<dbReference type="HOGENOM" id="CLU_017947_3_1_4"/>
<dbReference type="OrthoDB" id="140919at2"/>
<dbReference type="UniPathway" id="UPA00109">
    <property type="reaction ID" value="UER00181"/>
</dbReference>
<dbReference type="UniPathway" id="UPA00138"/>
<dbReference type="Proteomes" id="UP000008332">
    <property type="component" value="Chromosome"/>
</dbReference>
<dbReference type="GO" id="GO:0005829">
    <property type="term" value="C:cytosol"/>
    <property type="evidence" value="ECO:0007669"/>
    <property type="project" value="TreeGrafter"/>
</dbReference>
<dbReference type="GO" id="GO:0097367">
    <property type="term" value="F:carbohydrate derivative binding"/>
    <property type="evidence" value="ECO:0007669"/>
    <property type="project" value="InterPro"/>
</dbReference>
<dbReference type="GO" id="GO:0004347">
    <property type="term" value="F:glucose-6-phosphate isomerase activity"/>
    <property type="evidence" value="ECO:0007669"/>
    <property type="project" value="UniProtKB-UniRule"/>
</dbReference>
<dbReference type="GO" id="GO:0048029">
    <property type="term" value="F:monosaccharide binding"/>
    <property type="evidence" value="ECO:0007669"/>
    <property type="project" value="TreeGrafter"/>
</dbReference>
<dbReference type="GO" id="GO:0006094">
    <property type="term" value="P:gluconeogenesis"/>
    <property type="evidence" value="ECO:0007669"/>
    <property type="project" value="UniProtKB-UniRule"/>
</dbReference>
<dbReference type="GO" id="GO:0051156">
    <property type="term" value="P:glucose 6-phosphate metabolic process"/>
    <property type="evidence" value="ECO:0007669"/>
    <property type="project" value="TreeGrafter"/>
</dbReference>
<dbReference type="GO" id="GO:0006096">
    <property type="term" value="P:glycolytic process"/>
    <property type="evidence" value="ECO:0007669"/>
    <property type="project" value="UniProtKB-UniRule"/>
</dbReference>
<dbReference type="CDD" id="cd05015">
    <property type="entry name" value="SIS_PGI_1"/>
    <property type="match status" value="1"/>
</dbReference>
<dbReference type="CDD" id="cd05016">
    <property type="entry name" value="SIS_PGI_2"/>
    <property type="match status" value="1"/>
</dbReference>
<dbReference type="Gene3D" id="1.10.1390.10">
    <property type="match status" value="1"/>
</dbReference>
<dbReference type="Gene3D" id="3.40.50.10490">
    <property type="entry name" value="Glucose-6-phosphate isomerase like protein, domain 1"/>
    <property type="match status" value="2"/>
</dbReference>
<dbReference type="HAMAP" id="MF_00473">
    <property type="entry name" value="G6P_isomerase"/>
    <property type="match status" value="1"/>
</dbReference>
<dbReference type="InterPro" id="IPR001672">
    <property type="entry name" value="G6P_Isomerase"/>
</dbReference>
<dbReference type="InterPro" id="IPR023096">
    <property type="entry name" value="G6P_Isomerase_C"/>
</dbReference>
<dbReference type="InterPro" id="IPR018189">
    <property type="entry name" value="Phosphoglucose_isomerase_CS"/>
</dbReference>
<dbReference type="InterPro" id="IPR046348">
    <property type="entry name" value="SIS_dom_sf"/>
</dbReference>
<dbReference type="InterPro" id="IPR035476">
    <property type="entry name" value="SIS_PGI_1"/>
</dbReference>
<dbReference type="InterPro" id="IPR035482">
    <property type="entry name" value="SIS_PGI_2"/>
</dbReference>
<dbReference type="NCBIfam" id="NF001211">
    <property type="entry name" value="PRK00179.1"/>
    <property type="match status" value="1"/>
</dbReference>
<dbReference type="PANTHER" id="PTHR11469">
    <property type="entry name" value="GLUCOSE-6-PHOSPHATE ISOMERASE"/>
    <property type="match status" value="1"/>
</dbReference>
<dbReference type="PANTHER" id="PTHR11469:SF1">
    <property type="entry name" value="GLUCOSE-6-PHOSPHATE ISOMERASE"/>
    <property type="match status" value="1"/>
</dbReference>
<dbReference type="Pfam" id="PF00342">
    <property type="entry name" value="PGI"/>
    <property type="match status" value="1"/>
</dbReference>
<dbReference type="PRINTS" id="PR00662">
    <property type="entry name" value="G6PISOMERASE"/>
</dbReference>
<dbReference type="SUPFAM" id="SSF53697">
    <property type="entry name" value="SIS domain"/>
    <property type="match status" value="1"/>
</dbReference>
<dbReference type="PROSITE" id="PS00765">
    <property type="entry name" value="P_GLUCOSE_ISOMERASE_1"/>
    <property type="match status" value="1"/>
</dbReference>
<dbReference type="PROSITE" id="PS00174">
    <property type="entry name" value="P_GLUCOSE_ISOMERASE_2"/>
    <property type="match status" value="1"/>
</dbReference>
<dbReference type="PROSITE" id="PS51463">
    <property type="entry name" value="P_GLUCOSE_ISOMERASE_3"/>
    <property type="match status" value="1"/>
</dbReference>
<reference key="1">
    <citation type="submission" date="2006-02" db="EMBL/GenBank/DDBJ databases">
        <title>Complete sequence of chromosome of Rhodoferax ferrireducens DSM 15236.</title>
        <authorList>
            <person name="Copeland A."/>
            <person name="Lucas S."/>
            <person name="Lapidus A."/>
            <person name="Barry K."/>
            <person name="Detter J.C."/>
            <person name="Glavina del Rio T."/>
            <person name="Hammon N."/>
            <person name="Israni S."/>
            <person name="Pitluck S."/>
            <person name="Brettin T."/>
            <person name="Bruce D."/>
            <person name="Han C."/>
            <person name="Tapia R."/>
            <person name="Gilna P."/>
            <person name="Kiss H."/>
            <person name="Schmutz J."/>
            <person name="Larimer F."/>
            <person name="Land M."/>
            <person name="Kyrpides N."/>
            <person name="Ivanova N."/>
            <person name="Richardson P."/>
        </authorList>
    </citation>
    <scope>NUCLEOTIDE SEQUENCE [LARGE SCALE GENOMIC DNA]</scope>
    <source>
        <strain>ATCC BAA-621 / DSM 15236 / T118</strain>
    </source>
</reference>
<name>G6PI_ALBFT</name>
<comment type="function">
    <text evidence="1">Catalyzes the reversible isomerization of glucose-6-phosphate to fructose-6-phosphate.</text>
</comment>
<comment type="catalytic activity">
    <reaction evidence="1">
        <text>alpha-D-glucose 6-phosphate = beta-D-fructose 6-phosphate</text>
        <dbReference type="Rhea" id="RHEA:11816"/>
        <dbReference type="ChEBI" id="CHEBI:57634"/>
        <dbReference type="ChEBI" id="CHEBI:58225"/>
        <dbReference type="EC" id="5.3.1.9"/>
    </reaction>
</comment>
<comment type="pathway">
    <text evidence="1">Carbohydrate biosynthesis; gluconeogenesis.</text>
</comment>
<comment type="pathway">
    <text evidence="1">Carbohydrate degradation; glycolysis; D-glyceraldehyde 3-phosphate and glycerone phosphate from D-glucose: step 2/4.</text>
</comment>
<comment type="subcellular location">
    <subcellularLocation>
        <location evidence="1">Cytoplasm</location>
    </subcellularLocation>
</comment>
<comment type="similarity">
    <text evidence="1">Belongs to the GPI family.</text>
</comment>
<organism>
    <name type="scientific">Albidiferax ferrireducens (strain ATCC BAA-621 / DSM 15236 / T118)</name>
    <name type="common">Rhodoferax ferrireducens</name>
    <dbReference type="NCBI Taxonomy" id="338969"/>
    <lineage>
        <taxon>Bacteria</taxon>
        <taxon>Pseudomonadati</taxon>
        <taxon>Pseudomonadota</taxon>
        <taxon>Betaproteobacteria</taxon>
        <taxon>Burkholderiales</taxon>
        <taxon>Comamonadaceae</taxon>
        <taxon>Rhodoferax</taxon>
    </lineage>
</organism>
<evidence type="ECO:0000255" key="1">
    <source>
        <dbReference type="HAMAP-Rule" id="MF_00473"/>
    </source>
</evidence>